<protein>
    <recommendedName>
        <fullName evidence="4">Toxin Bcg III 31.16</fullName>
        <shortName evidence="4">Toxin Bcg 31.16</shortName>
    </recommendedName>
</protein>
<name>BDS16_BUNCN</name>
<sequence>GTTCYCGSTLGIYWFAVSSCPSGRGYTGHCGYFLGLCC</sequence>
<comment type="function">
    <text evidence="3">Possible modulator of crustacean voltage-gated sodium channels (Nav).</text>
</comment>
<comment type="subcellular location">
    <subcellularLocation>
        <location evidence="5">Secreted</location>
    </subcellularLocation>
    <subcellularLocation>
        <location evidence="5">Nematocyst</location>
    </subcellularLocation>
</comment>
<comment type="mass spectrometry"/>
<comment type="miscellaneous">
    <text evidence="3 5">Despite this toxin having similarity to members of a potassium channel toxin family, the effect seen on crab leg nerve was similar to that of sodium channel toxins.</text>
</comment>
<comment type="similarity">
    <text evidence="2">Belongs to the sea anemone type 3 (BDS) potassium channel toxin family.</text>
</comment>
<reference key="1">
    <citation type="journal article" date="2008" name="Comp. Biochem. Physiol.">
        <title>Proteomics of the neurotoxic fraction from the sea anemone Bunodosoma cangicum venom: novel peptides belonging to new classes of toxins.</title>
        <authorList>
            <person name="Zaharenko A.J."/>
            <person name="Ferreira W.A. Jr."/>
            <person name="Oliveira J.S."/>
            <person name="Richardson M."/>
            <person name="Pimenta D.C."/>
            <person name="Konno K."/>
            <person name="Portaro F.C."/>
            <person name="de Freitas J.C."/>
        </authorList>
    </citation>
    <scope>PROTEIN SEQUENCE</scope>
    <scope>FUNCTION</scope>
    <scope>MASS SPECTROMETRY</scope>
</reference>
<dbReference type="SMR" id="P86461"/>
<dbReference type="GO" id="GO:0005576">
    <property type="term" value="C:extracellular region"/>
    <property type="evidence" value="ECO:0007669"/>
    <property type="project" value="UniProtKB-SubCell"/>
</dbReference>
<dbReference type="GO" id="GO:0042151">
    <property type="term" value="C:nematocyst"/>
    <property type="evidence" value="ECO:0007669"/>
    <property type="project" value="UniProtKB-SubCell"/>
</dbReference>
<dbReference type="GO" id="GO:0008200">
    <property type="term" value="F:ion channel inhibitor activity"/>
    <property type="evidence" value="ECO:0007669"/>
    <property type="project" value="InterPro"/>
</dbReference>
<dbReference type="GO" id="GO:0017080">
    <property type="term" value="F:sodium channel regulator activity"/>
    <property type="evidence" value="ECO:0007669"/>
    <property type="project" value="UniProtKB-KW"/>
</dbReference>
<dbReference type="GO" id="GO:0090729">
    <property type="term" value="F:toxin activity"/>
    <property type="evidence" value="ECO:0007669"/>
    <property type="project" value="UniProtKB-KW"/>
</dbReference>
<dbReference type="Gene3D" id="2.20.20.10">
    <property type="entry name" value="Anthopleurin-A"/>
    <property type="match status" value="1"/>
</dbReference>
<dbReference type="InterPro" id="IPR012414">
    <property type="entry name" value="BDS_K_chnl_tox"/>
</dbReference>
<dbReference type="InterPro" id="IPR023355">
    <property type="entry name" value="Myo_ane_neurotoxin_sf"/>
</dbReference>
<dbReference type="Pfam" id="PF07936">
    <property type="entry name" value="Defensin_4"/>
    <property type="match status" value="1"/>
</dbReference>
<proteinExistence type="evidence at protein level"/>
<feature type="chain" id="PRO_0000392959" description="Toxin Bcg III 31.16">
    <location>
        <begin position="1"/>
        <end position="38" status="greater than"/>
    </location>
</feature>
<feature type="disulfide bond" evidence="1">
    <location>
        <begin position="4"/>
        <end position="37"/>
    </location>
</feature>
<feature type="disulfide bond" evidence="1">
    <location>
        <begin position="6"/>
        <end position="30"/>
    </location>
</feature>
<feature type="disulfide bond" evidence="1">
    <location>
        <begin position="20"/>
        <end position="38"/>
    </location>
</feature>
<feature type="non-terminal residue">
    <location>
        <position position="38"/>
    </location>
</feature>
<evidence type="ECO:0000250" key="1">
    <source>
        <dbReference type="UniProtKB" id="P61541"/>
    </source>
</evidence>
<evidence type="ECO:0000255" key="2"/>
<evidence type="ECO:0000269" key="3">
    <source>
    </source>
</evidence>
<evidence type="ECO:0000303" key="4">
    <source>
    </source>
</evidence>
<evidence type="ECO:0000305" key="5"/>
<organism>
    <name type="scientific">Bunodosoma cangicum</name>
    <name type="common">Sea anemone</name>
    <dbReference type="NCBI Taxonomy" id="138296"/>
    <lineage>
        <taxon>Eukaryota</taxon>
        <taxon>Metazoa</taxon>
        <taxon>Cnidaria</taxon>
        <taxon>Anthozoa</taxon>
        <taxon>Hexacorallia</taxon>
        <taxon>Actiniaria</taxon>
        <taxon>Actiniidae</taxon>
        <taxon>Bunodosoma</taxon>
    </lineage>
</organism>
<keyword id="KW-0903">Direct protein sequencing</keyword>
<keyword id="KW-1015">Disulfide bond</keyword>
<keyword id="KW-0872">Ion channel impairing toxin</keyword>
<keyword id="KW-0166">Nematocyst</keyword>
<keyword id="KW-0528">Neurotoxin</keyword>
<keyword id="KW-0964">Secreted</keyword>
<keyword id="KW-0800">Toxin</keyword>
<keyword id="KW-0738">Voltage-gated sodium channel impairing toxin</keyword>
<accession>P86461</accession>